<proteinExistence type="evidence at transcript level"/>
<dbReference type="EMBL" id="AF268463">
    <property type="protein sequence ID" value="AAF78965.1"/>
    <property type="molecule type" value="mRNA"/>
</dbReference>
<dbReference type="EMBL" id="F14590">
    <property type="protein sequence ID" value="CAA23141.1"/>
    <property type="molecule type" value="mRNA"/>
</dbReference>
<dbReference type="RefSeq" id="NP_999529.1">
    <property type="nucleotide sequence ID" value="NM_214364.1"/>
</dbReference>
<dbReference type="SMR" id="Q29380"/>
<dbReference type="FunCoup" id="Q29380">
    <property type="interactions" value="1897"/>
</dbReference>
<dbReference type="STRING" id="9823.ENSSSCP00000007488"/>
<dbReference type="iPTMnet" id="Q29380"/>
<dbReference type="PaxDb" id="9823-ENSSSCP00000007488"/>
<dbReference type="PeptideAtlas" id="Q29380"/>
<dbReference type="GeneID" id="397651"/>
<dbReference type="KEGG" id="ssc:397651"/>
<dbReference type="CTD" id="7419"/>
<dbReference type="eggNOG" id="KOG3126">
    <property type="taxonomic scope" value="Eukaryota"/>
</dbReference>
<dbReference type="InParanoid" id="Q29380"/>
<dbReference type="OrthoDB" id="7827681at2759"/>
<dbReference type="Proteomes" id="UP000008227">
    <property type="component" value="Unplaced"/>
</dbReference>
<dbReference type="Proteomes" id="UP000314985">
    <property type="component" value="Unplaced"/>
</dbReference>
<dbReference type="Proteomes" id="UP000694570">
    <property type="component" value="Unplaced"/>
</dbReference>
<dbReference type="Proteomes" id="UP000694571">
    <property type="component" value="Unplaced"/>
</dbReference>
<dbReference type="Proteomes" id="UP000694720">
    <property type="component" value="Unplaced"/>
</dbReference>
<dbReference type="Proteomes" id="UP000694722">
    <property type="component" value="Unplaced"/>
</dbReference>
<dbReference type="Proteomes" id="UP000694723">
    <property type="component" value="Unplaced"/>
</dbReference>
<dbReference type="Proteomes" id="UP000694724">
    <property type="component" value="Unplaced"/>
</dbReference>
<dbReference type="Proteomes" id="UP000694725">
    <property type="component" value="Unplaced"/>
</dbReference>
<dbReference type="Proteomes" id="UP000694726">
    <property type="component" value="Unplaced"/>
</dbReference>
<dbReference type="Proteomes" id="UP000694727">
    <property type="component" value="Unplaced"/>
</dbReference>
<dbReference type="Proteomes" id="UP000694728">
    <property type="component" value="Unplaced"/>
</dbReference>
<dbReference type="GO" id="GO:0016020">
    <property type="term" value="C:membrane"/>
    <property type="evidence" value="ECO:0000250"/>
    <property type="project" value="UniProtKB"/>
</dbReference>
<dbReference type="GO" id="GO:0005741">
    <property type="term" value="C:mitochondrial outer membrane"/>
    <property type="evidence" value="ECO:0000318"/>
    <property type="project" value="GO_Central"/>
</dbReference>
<dbReference type="GO" id="GO:0046930">
    <property type="term" value="C:pore complex"/>
    <property type="evidence" value="ECO:0007669"/>
    <property type="project" value="UniProtKB-KW"/>
</dbReference>
<dbReference type="GO" id="GO:0000166">
    <property type="term" value="F:nucleotide binding"/>
    <property type="evidence" value="ECO:0007669"/>
    <property type="project" value="UniProtKB-KW"/>
</dbReference>
<dbReference type="GO" id="GO:0015288">
    <property type="term" value="F:porin activity"/>
    <property type="evidence" value="ECO:0007669"/>
    <property type="project" value="UniProtKB-KW"/>
</dbReference>
<dbReference type="GO" id="GO:0008308">
    <property type="term" value="F:voltage-gated monoatomic anion channel activity"/>
    <property type="evidence" value="ECO:0000318"/>
    <property type="project" value="GO_Central"/>
</dbReference>
<dbReference type="GO" id="GO:0120317">
    <property type="term" value="P:sperm mitochondrial sheath assembly"/>
    <property type="evidence" value="ECO:0000250"/>
    <property type="project" value="UniProtKB"/>
</dbReference>
<dbReference type="GO" id="GO:0007283">
    <property type="term" value="P:spermatogenesis"/>
    <property type="evidence" value="ECO:0000250"/>
    <property type="project" value="UniProtKB"/>
</dbReference>
<dbReference type="CDD" id="cd07306">
    <property type="entry name" value="Porin3_VDAC"/>
    <property type="match status" value="1"/>
</dbReference>
<dbReference type="FunFam" id="2.40.160.10:FF:000001">
    <property type="entry name" value="Voltage-dependent anion-selective channel protein 2"/>
    <property type="match status" value="1"/>
</dbReference>
<dbReference type="Gene3D" id="2.40.160.10">
    <property type="entry name" value="Porin"/>
    <property type="match status" value="1"/>
</dbReference>
<dbReference type="InterPro" id="IPR023614">
    <property type="entry name" value="Porin_dom_sf"/>
</dbReference>
<dbReference type="InterPro" id="IPR001925">
    <property type="entry name" value="Porin_Euk"/>
</dbReference>
<dbReference type="InterPro" id="IPR027246">
    <property type="entry name" value="Porin_Euk/Tom40"/>
</dbReference>
<dbReference type="PANTHER" id="PTHR11743">
    <property type="entry name" value="VOLTAGE-DEPENDENT ANION-SELECTIVE CHANNEL"/>
    <property type="match status" value="1"/>
</dbReference>
<dbReference type="PANTHER" id="PTHR11743:SF28">
    <property type="entry name" value="VOLTAGE-DEPENDENT ANION-SELECTIVE CHANNEL PROTEIN 3"/>
    <property type="match status" value="1"/>
</dbReference>
<dbReference type="Pfam" id="PF01459">
    <property type="entry name" value="Porin_3"/>
    <property type="match status" value="1"/>
</dbReference>
<dbReference type="PRINTS" id="PR00185">
    <property type="entry name" value="EUKARYTPORIN"/>
</dbReference>
<dbReference type="PROSITE" id="PS00558">
    <property type="entry name" value="EUKARYOTIC_PORIN"/>
    <property type="match status" value="1"/>
</dbReference>
<sequence>MCNTPTYCDLGKAAKDVFNKGYGFGMVKIDLRTKSCSGVEFSTSGHAYTDTGKASGNLETKYKICDHGLTFTQKWNTDNTLGTEISLENKLAEGLKLTLDTIFVPNTGKKSGKLKASYKRECFSIGSNVDIDFAGPTIYGWAVLALEGWLAGYQMSFDTAKSKLSQNNFALGYKAADFQLHTHVNDGTEFGGSIYQKVNEKIETSINLAWTAGSNNTRFGIAAKYKLDCRTSLSAKVNNASLIGLGYTQTLRPGVKLTLSALIDGKNFSAGGHKVGLGFELEA</sequence>
<feature type="initiator methionine" description="Removed" evidence="4">
    <location>
        <position position="1"/>
    </location>
</feature>
<feature type="chain" id="PRO_0000050514" description="Non-selective voltage-gated ion channel VDAC3">
    <location>
        <begin position="2"/>
        <end position="283"/>
    </location>
</feature>
<feature type="transmembrane region" description="Beta stranded" evidence="1">
    <location>
        <begin position="26"/>
        <end position="35"/>
    </location>
</feature>
<feature type="transmembrane region" description="Beta stranded" evidence="1">
    <location>
        <begin position="39"/>
        <end position="47"/>
    </location>
</feature>
<feature type="transmembrane region" description="Beta stranded" evidence="1">
    <location>
        <begin position="54"/>
        <end position="64"/>
    </location>
</feature>
<feature type="transmembrane region" description="Beta stranded" evidence="1">
    <location>
        <begin position="69"/>
        <end position="76"/>
    </location>
</feature>
<feature type="transmembrane region" description="Beta stranded" evidence="1">
    <location>
        <begin position="80"/>
        <end position="89"/>
    </location>
</feature>
<feature type="transmembrane region" description="Beta stranded" evidence="1">
    <location>
        <begin position="95"/>
        <end position="104"/>
    </location>
</feature>
<feature type="transmembrane region" description="Beta stranded" evidence="1">
    <location>
        <begin position="111"/>
        <end position="120"/>
    </location>
</feature>
<feature type="transmembrane region" description="Beta stranded" evidence="1">
    <location>
        <begin position="123"/>
        <end position="130"/>
    </location>
</feature>
<feature type="transmembrane region" description="Beta stranded" evidence="1">
    <location>
        <begin position="137"/>
        <end position="145"/>
    </location>
</feature>
<feature type="transmembrane region" description="Beta stranded" evidence="1">
    <location>
        <begin position="150"/>
        <end position="158"/>
    </location>
</feature>
<feature type="transmembrane region" description="Beta stranded" evidence="1">
    <location>
        <begin position="163"/>
        <end position="175"/>
    </location>
</feature>
<feature type="transmembrane region" description="Beta stranded" evidence="1">
    <location>
        <begin position="178"/>
        <end position="185"/>
    </location>
</feature>
<feature type="transmembrane region" description="Beta stranded" evidence="1">
    <location>
        <begin position="189"/>
        <end position="198"/>
    </location>
</feature>
<feature type="transmembrane region" description="Beta stranded" evidence="1">
    <location>
        <begin position="202"/>
        <end position="211"/>
    </location>
</feature>
<feature type="transmembrane region" description="Beta stranded" evidence="1">
    <location>
        <begin position="218"/>
        <end position="227"/>
    </location>
</feature>
<feature type="transmembrane region" description="Beta stranded" evidence="1">
    <location>
        <begin position="231"/>
        <end position="238"/>
    </location>
</feature>
<feature type="transmembrane region" description="Beta stranded" evidence="1">
    <location>
        <begin position="242"/>
        <end position="251"/>
    </location>
</feature>
<feature type="transmembrane region" description="Beta stranded" evidence="1">
    <location>
        <begin position="254"/>
        <end position="263"/>
    </location>
</feature>
<feature type="transmembrane region" description="Beta stranded" evidence="1">
    <location>
        <begin position="273"/>
        <end position="282"/>
    </location>
</feature>
<feature type="binding site" evidence="1">
    <location>
        <begin position="242"/>
        <end position="244"/>
    </location>
    <ligand>
        <name>NAD(+)</name>
        <dbReference type="ChEBI" id="CHEBI:57540"/>
    </ligand>
</feature>
<feature type="binding site" evidence="1">
    <location>
        <begin position="260"/>
        <end position="264"/>
    </location>
    <ligand>
        <name>NAD(+)</name>
        <dbReference type="ChEBI" id="CHEBI:57540"/>
    </ligand>
</feature>
<feature type="modified residue" description="N-acetylcysteine" evidence="4">
    <location>
        <position position="2"/>
    </location>
</feature>
<feature type="modified residue" description="Phosphothreonine" evidence="4">
    <location>
        <position position="4"/>
    </location>
</feature>
<feature type="modified residue" description="N6-acetyllysine" evidence="2">
    <location>
        <position position="12"/>
    </location>
</feature>
<feature type="modified residue" description="N6-acetyllysine" evidence="2">
    <location>
        <position position="15"/>
    </location>
</feature>
<feature type="modified residue" description="N6-acetyllysine" evidence="4">
    <location>
        <position position="20"/>
    </location>
</feature>
<feature type="modified residue" description="N6-acetyllysine" evidence="4">
    <location>
        <position position="90"/>
    </location>
</feature>
<feature type="modified residue" description="Phosphoserine" evidence="3">
    <location>
        <position position="241"/>
    </location>
</feature>
<feature type="modified residue" description="N6-acetyllysine; alternate" evidence="2">
    <location>
        <position position="266"/>
    </location>
</feature>
<feature type="cross-link" description="Glycyl lysine isopeptide (Lys-Gly) (interchain with G-Cter in ubiquitin)" evidence="4">
    <location>
        <position position="53"/>
    </location>
</feature>
<feature type="cross-link" description="Glycyl lysine isopeptide (Lys-Gly) (interchain with G-Cter in ubiquitin)" evidence="4">
    <location>
        <position position="109"/>
    </location>
</feature>
<feature type="cross-link" description="Glycyl lysine isopeptide (Lys-Gly) (interchain with G-Cter in ubiquitin)" evidence="4">
    <location>
        <position position="110"/>
    </location>
</feature>
<feature type="cross-link" description="Glycyl lysine isopeptide (Lys-Gly) (interchain with G-Cter in ubiquitin); alternate" evidence="4">
    <location>
        <position position="266"/>
    </location>
</feature>
<feature type="sequence conflict" description="In Ref. 2; CAA23141." evidence="5" ref="2">
    <original>H</original>
    <variation>Y</variation>
    <location>
        <position position="67"/>
    </location>
</feature>
<gene>
    <name evidence="4" type="primary">VDAC3</name>
</gene>
<evidence type="ECO:0000250" key="1">
    <source>
        <dbReference type="UniProtKB" id="P21796"/>
    </source>
</evidence>
<evidence type="ECO:0000250" key="2">
    <source>
        <dbReference type="UniProtKB" id="Q60931"/>
    </source>
</evidence>
<evidence type="ECO:0000250" key="3">
    <source>
        <dbReference type="UniProtKB" id="Q9R1Z0"/>
    </source>
</evidence>
<evidence type="ECO:0000250" key="4">
    <source>
        <dbReference type="UniProtKB" id="Q9Y277"/>
    </source>
</evidence>
<evidence type="ECO:0000305" key="5"/>
<organism>
    <name type="scientific">Sus scrofa</name>
    <name type="common">Pig</name>
    <dbReference type="NCBI Taxonomy" id="9823"/>
    <lineage>
        <taxon>Eukaryota</taxon>
        <taxon>Metazoa</taxon>
        <taxon>Chordata</taxon>
        <taxon>Craniata</taxon>
        <taxon>Vertebrata</taxon>
        <taxon>Euteleostomi</taxon>
        <taxon>Mammalia</taxon>
        <taxon>Eutheria</taxon>
        <taxon>Laurasiatheria</taxon>
        <taxon>Artiodactyla</taxon>
        <taxon>Suina</taxon>
        <taxon>Suidae</taxon>
        <taxon>Sus</taxon>
    </lineage>
</organism>
<comment type="function">
    <text evidence="2 4">Non-selective voltage-gated ion channel that mediates the transport of anions and cations through the mitochondrion outer membrane and plasma membrane. Forms a high-conducting channel with a stable open state and a voltage-induced closure with a mild preference for anions over cations (By similarity). Involved in male fertility and sperm mitochondrial sheath formation (By similarity).</text>
</comment>
<comment type="catalytic activity">
    <reaction evidence="4">
        <text>chloride(in) = chloride(out)</text>
        <dbReference type="Rhea" id="RHEA:29823"/>
        <dbReference type="ChEBI" id="CHEBI:17996"/>
    </reaction>
</comment>
<comment type="catalytic activity">
    <reaction evidence="4">
        <text>K(+)(in) = K(+)(out)</text>
        <dbReference type="Rhea" id="RHEA:29463"/>
        <dbReference type="ChEBI" id="CHEBI:29103"/>
    </reaction>
</comment>
<comment type="subunit">
    <text evidence="2">Interacts with ARMC12 in a TBC1D21-dependent manner. Interacts with MISFA.</text>
</comment>
<comment type="subcellular location">
    <subcellularLocation>
        <location evidence="1">Mitochondrion outer membrane</location>
    </subcellularLocation>
    <subcellularLocation>
        <location evidence="4">Membrane</location>
    </subcellularLocation>
    <text evidence="4">May localize to non-mitochondrial membranes.</text>
</comment>
<comment type="domain">
    <text evidence="1">Consists mainly of a membrane-spanning beta-barrel formed by 19 beta-strands.</text>
</comment>
<comment type="PTM">
    <text evidence="4">Ubiquitinated by PRKN during mitophagy, leading to its degradation and enhancement of mitophagy. Deubiquitinated by USP30.</text>
</comment>
<comment type="similarity">
    <text evidence="5">Belongs to the eukaryotic mitochondrial porin family.</text>
</comment>
<keyword id="KW-0007">Acetylation</keyword>
<keyword id="KW-0406">Ion transport</keyword>
<keyword id="KW-1017">Isopeptide bond</keyword>
<keyword id="KW-0472">Membrane</keyword>
<keyword id="KW-0496">Mitochondrion</keyword>
<keyword id="KW-1000">Mitochondrion outer membrane</keyword>
<keyword id="KW-0520">NAD</keyword>
<keyword id="KW-0547">Nucleotide-binding</keyword>
<keyword id="KW-0597">Phosphoprotein</keyword>
<keyword id="KW-0626">Porin</keyword>
<keyword id="KW-1185">Reference proteome</keyword>
<keyword id="KW-0812">Transmembrane</keyword>
<keyword id="KW-1134">Transmembrane beta strand</keyword>
<keyword id="KW-0813">Transport</keyword>
<keyword id="KW-0832">Ubl conjugation</keyword>
<name>VDAC3_PIG</name>
<reference key="1">
    <citation type="submission" date="2000-05" db="EMBL/GenBank/DDBJ databases">
        <title>Ion channels in the lens.</title>
        <authorList>
            <person name="Rae J.L."/>
        </authorList>
    </citation>
    <scope>NUCLEOTIDE SEQUENCE [MRNA]</scope>
    <source>
        <tissue>Lens</tissue>
    </source>
</reference>
<reference key="2">
    <citation type="journal article" date="1996" name="Mamm. Genome">
        <title>Evaluation and characterization of a porcine small intestine cDNA library: analysis of 839 clones.</title>
        <authorList>
            <person name="Winteroe A.K."/>
            <person name="Fredholm M."/>
            <person name="Davies W."/>
        </authorList>
    </citation>
    <scope>NUCLEOTIDE SEQUENCE [LARGE SCALE MRNA] OF 5-116</scope>
    <source>
        <tissue>Small intestine</tissue>
    </source>
</reference>
<protein>
    <recommendedName>
        <fullName evidence="4">Non-selective voltage-gated ion channel VDAC3</fullName>
        <shortName>VDAC-3</shortName>
    </recommendedName>
    <alternativeName>
        <fullName>Outer mitochondrial membrane protein porin 3</fullName>
    </alternativeName>
</protein>
<accession>Q29380</accession>
<accession>Q9MZ14</accession>